<sequence>MNTYNDNPKQCLKKIVESASAKFNESVDIAVNLGVDSRKSEEQVRGTVVLPKGIGKNIKVAVFAQDKHLLEAEKAGADIAGGEDLVEEIKKGRKLDVDWCITTPDFMAKITPIAKVLGVKGLMPNPKFGTVTSNIAEAIKTIKSGQVKFGTDKNGVIHGKLGNIKFDIDDLLENLKAFLKVIKDNKPISAKGIYFKGVFLNSTMGKAYKIGKVEDII</sequence>
<accession>Q73IX2</accession>
<feature type="chain" id="PRO_0000307662" description="Large ribosomal subunit protein uL1">
    <location>
        <begin position="1"/>
        <end position="217"/>
    </location>
</feature>
<name>RL1_WOLPM</name>
<evidence type="ECO:0000255" key="1">
    <source>
        <dbReference type="HAMAP-Rule" id="MF_01318"/>
    </source>
</evidence>
<evidence type="ECO:0000305" key="2"/>
<proteinExistence type="inferred from homology"/>
<gene>
    <name evidence="1" type="primary">rplA</name>
    <name type="ordered locus">WD_0021</name>
</gene>
<keyword id="KW-0678">Repressor</keyword>
<keyword id="KW-0687">Ribonucleoprotein</keyword>
<keyword id="KW-0689">Ribosomal protein</keyword>
<keyword id="KW-0694">RNA-binding</keyword>
<keyword id="KW-0699">rRNA-binding</keyword>
<keyword id="KW-0810">Translation regulation</keyword>
<keyword id="KW-0820">tRNA-binding</keyword>
<comment type="function">
    <text evidence="1">Binds directly to 23S rRNA. The L1 stalk is quite mobile in the ribosome, and is involved in E site tRNA release.</text>
</comment>
<comment type="function">
    <text evidence="1">Protein L1 is also a translational repressor protein, it controls the translation of the L11 operon by binding to its mRNA.</text>
</comment>
<comment type="subunit">
    <text evidence="1">Part of the 50S ribosomal subunit.</text>
</comment>
<comment type="similarity">
    <text evidence="1">Belongs to the universal ribosomal protein uL1 family.</text>
</comment>
<organism>
    <name type="scientific">Wolbachia pipientis wMel</name>
    <dbReference type="NCBI Taxonomy" id="163164"/>
    <lineage>
        <taxon>Bacteria</taxon>
        <taxon>Pseudomonadati</taxon>
        <taxon>Pseudomonadota</taxon>
        <taxon>Alphaproteobacteria</taxon>
        <taxon>Rickettsiales</taxon>
        <taxon>Anaplasmataceae</taxon>
        <taxon>Wolbachieae</taxon>
        <taxon>Wolbachia</taxon>
    </lineage>
</organism>
<reference key="1">
    <citation type="journal article" date="2004" name="PLoS Biol.">
        <title>Phylogenomics of the reproductive parasite Wolbachia pipientis wMel: a streamlined genome overrun by mobile genetic elements.</title>
        <authorList>
            <person name="Wu M."/>
            <person name="Sun L.V."/>
            <person name="Vamathevan J.J."/>
            <person name="Riegler M."/>
            <person name="DeBoy R.T."/>
            <person name="Brownlie J.C."/>
            <person name="McGraw E.A."/>
            <person name="Martin W."/>
            <person name="Esser C."/>
            <person name="Ahmadinejad N."/>
            <person name="Wiegand C."/>
            <person name="Madupu R."/>
            <person name="Beanan M.J."/>
            <person name="Brinkac L.M."/>
            <person name="Daugherty S.C."/>
            <person name="Durkin A.S."/>
            <person name="Kolonay J.F."/>
            <person name="Nelson W.C."/>
            <person name="Mohamoud Y."/>
            <person name="Lee P."/>
            <person name="Berry K.J."/>
            <person name="Young M.B."/>
            <person name="Utterback T.R."/>
            <person name="Weidman J.F."/>
            <person name="Nierman W.C."/>
            <person name="Paulsen I.T."/>
            <person name="Nelson K.E."/>
            <person name="Tettelin H."/>
            <person name="O'Neill S.L."/>
            <person name="Eisen J.A."/>
        </authorList>
    </citation>
    <scope>NUCLEOTIDE SEQUENCE [LARGE SCALE GENOMIC DNA]</scope>
</reference>
<protein>
    <recommendedName>
        <fullName evidence="1">Large ribosomal subunit protein uL1</fullName>
    </recommendedName>
    <alternativeName>
        <fullName evidence="2">50S ribosomal protein L1</fullName>
    </alternativeName>
</protein>
<dbReference type="EMBL" id="AE017196">
    <property type="protein sequence ID" value="AAS13788.1"/>
    <property type="molecule type" value="Genomic_DNA"/>
</dbReference>
<dbReference type="RefSeq" id="WP_010962311.1">
    <property type="nucleotide sequence ID" value="NZ_OX384529.1"/>
</dbReference>
<dbReference type="SMR" id="Q73IX2"/>
<dbReference type="EnsemblBacteria" id="AAS13788">
    <property type="protein sequence ID" value="AAS13788"/>
    <property type="gene ID" value="WD_0021"/>
</dbReference>
<dbReference type="GeneID" id="70035517"/>
<dbReference type="KEGG" id="wol:WD_0021"/>
<dbReference type="eggNOG" id="COG0081">
    <property type="taxonomic scope" value="Bacteria"/>
</dbReference>
<dbReference type="Proteomes" id="UP000008215">
    <property type="component" value="Chromosome"/>
</dbReference>
<dbReference type="GO" id="GO:0015934">
    <property type="term" value="C:large ribosomal subunit"/>
    <property type="evidence" value="ECO:0007669"/>
    <property type="project" value="InterPro"/>
</dbReference>
<dbReference type="GO" id="GO:0019843">
    <property type="term" value="F:rRNA binding"/>
    <property type="evidence" value="ECO:0007669"/>
    <property type="project" value="UniProtKB-UniRule"/>
</dbReference>
<dbReference type="GO" id="GO:0003735">
    <property type="term" value="F:structural constituent of ribosome"/>
    <property type="evidence" value="ECO:0007669"/>
    <property type="project" value="InterPro"/>
</dbReference>
<dbReference type="GO" id="GO:0000049">
    <property type="term" value="F:tRNA binding"/>
    <property type="evidence" value="ECO:0007669"/>
    <property type="project" value="UniProtKB-KW"/>
</dbReference>
<dbReference type="GO" id="GO:0006417">
    <property type="term" value="P:regulation of translation"/>
    <property type="evidence" value="ECO:0007669"/>
    <property type="project" value="UniProtKB-KW"/>
</dbReference>
<dbReference type="GO" id="GO:0006412">
    <property type="term" value="P:translation"/>
    <property type="evidence" value="ECO:0007669"/>
    <property type="project" value="UniProtKB-UniRule"/>
</dbReference>
<dbReference type="CDD" id="cd00403">
    <property type="entry name" value="Ribosomal_L1"/>
    <property type="match status" value="1"/>
</dbReference>
<dbReference type="FunFam" id="3.40.50.790:FF:000001">
    <property type="entry name" value="50S ribosomal protein L1"/>
    <property type="match status" value="1"/>
</dbReference>
<dbReference type="Gene3D" id="3.30.190.20">
    <property type="match status" value="1"/>
</dbReference>
<dbReference type="Gene3D" id="3.40.50.790">
    <property type="match status" value="1"/>
</dbReference>
<dbReference type="HAMAP" id="MF_01318_B">
    <property type="entry name" value="Ribosomal_uL1_B"/>
    <property type="match status" value="1"/>
</dbReference>
<dbReference type="InterPro" id="IPR005878">
    <property type="entry name" value="Ribosom_uL1_bac-type"/>
</dbReference>
<dbReference type="InterPro" id="IPR002143">
    <property type="entry name" value="Ribosomal_uL1"/>
</dbReference>
<dbReference type="InterPro" id="IPR023674">
    <property type="entry name" value="Ribosomal_uL1-like"/>
</dbReference>
<dbReference type="InterPro" id="IPR028364">
    <property type="entry name" value="Ribosomal_uL1/biogenesis"/>
</dbReference>
<dbReference type="InterPro" id="IPR016095">
    <property type="entry name" value="Ribosomal_uL1_3-a/b-sand"/>
</dbReference>
<dbReference type="NCBIfam" id="TIGR01169">
    <property type="entry name" value="rplA_bact"/>
    <property type="match status" value="1"/>
</dbReference>
<dbReference type="PANTHER" id="PTHR36427">
    <property type="entry name" value="54S RIBOSOMAL PROTEIN L1, MITOCHONDRIAL"/>
    <property type="match status" value="1"/>
</dbReference>
<dbReference type="PANTHER" id="PTHR36427:SF3">
    <property type="entry name" value="LARGE RIBOSOMAL SUBUNIT PROTEIN UL1M"/>
    <property type="match status" value="1"/>
</dbReference>
<dbReference type="Pfam" id="PF00687">
    <property type="entry name" value="Ribosomal_L1"/>
    <property type="match status" value="1"/>
</dbReference>
<dbReference type="PIRSF" id="PIRSF002155">
    <property type="entry name" value="Ribosomal_L1"/>
    <property type="match status" value="1"/>
</dbReference>
<dbReference type="SUPFAM" id="SSF56808">
    <property type="entry name" value="Ribosomal protein L1"/>
    <property type="match status" value="1"/>
</dbReference>